<organism>
    <name type="scientific">Bacillus thuringiensis subsp. morrisoni</name>
    <dbReference type="NCBI Taxonomy" id="1441"/>
    <lineage>
        <taxon>Bacteria</taxon>
        <taxon>Bacillati</taxon>
        <taxon>Bacillota</taxon>
        <taxon>Bacilli</taxon>
        <taxon>Bacillales</taxon>
        <taxon>Bacillaceae</taxon>
        <taxon>Bacillus</taxon>
        <taxon>Bacillus cereus group</taxon>
    </lineage>
</organism>
<dbReference type="EMBL" id="U28801">
    <property type="protein sequence ID" value="AAB00376.1"/>
    <property type="molecule type" value="Genomic_DNA"/>
</dbReference>
<dbReference type="SMR" id="Q45715"/>
<dbReference type="GO" id="GO:0005102">
    <property type="term" value="F:signaling receptor binding"/>
    <property type="evidence" value="ECO:0007669"/>
    <property type="project" value="InterPro"/>
</dbReference>
<dbReference type="GO" id="GO:0090729">
    <property type="term" value="F:toxin activity"/>
    <property type="evidence" value="ECO:0007669"/>
    <property type="project" value="UniProtKB-KW"/>
</dbReference>
<dbReference type="GO" id="GO:0030435">
    <property type="term" value="P:sporulation resulting in formation of a cellular spore"/>
    <property type="evidence" value="ECO:0007669"/>
    <property type="project" value="UniProtKB-KW"/>
</dbReference>
<dbReference type="GO" id="GO:0001907">
    <property type="term" value="P:symbiont-mediated killing of host cell"/>
    <property type="evidence" value="ECO:0007669"/>
    <property type="project" value="InterPro"/>
</dbReference>
<dbReference type="CDD" id="cd04085">
    <property type="entry name" value="delta_endotoxin_C"/>
    <property type="match status" value="1"/>
</dbReference>
<dbReference type="Gene3D" id="2.60.120.260">
    <property type="entry name" value="Galactose-binding domain-like"/>
    <property type="match status" value="1"/>
</dbReference>
<dbReference type="Gene3D" id="2.100.10.10">
    <property type="entry name" value="Pesticidal crystal protein, central domain"/>
    <property type="match status" value="1"/>
</dbReference>
<dbReference type="Gene3D" id="1.20.190.10">
    <property type="entry name" value="Pesticidal crystal protein, N-terminal domain"/>
    <property type="match status" value="1"/>
</dbReference>
<dbReference type="InterPro" id="IPR048645">
    <property type="entry name" value="Cry1Ac-like_dom-VII"/>
</dbReference>
<dbReference type="InterPro" id="IPR041587">
    <property type="entry name" value="Cry_V"/>
</dbReference>
<dbReference type="InterPro" id="IPR008979">
    <property type="entry name" value="Galactose-bd-like_sf"/>
</dbReference>
<dbReference type="InterPro" id="IPR038979">
    <property type="entry name" value="Pest_crys"/>
</dbReference>
<dbReference type="InterPro" id="IPR054544">
    <property type="entry name" value="Pest_crys_Cry1Aa_dom-IV"/>
</dbReference>
<dbReference type="InterPro" id="IPR005638">
    <property type="entry name" value="Pest_crys_dom-III"/>
</dbReference>
<dbReference type="InterPro" id="IPR005639">
    <property type="entry name" value="Pest_crys_dom_I"/>
</dbReference>
<dbReference type="InterPro" id="IPR036716">
    <property type="entry name" value="Pest_crys_N_sf"/>
</dbReference>
<dbReference type="InterPro" id="IPR036399">
    <property type="entry name" value="Pest_cryst_cen_dom_sf"/>
</dbReference>
<dbReference type="InterPro" id="IPR001178">
    <property type="entry name" value="Pest_cryst_dom_II"/>
</dbReference>
<dbReference type="PANTHER" id="PTHR37003">
    <property type="entry name" value="ENDOTOXIN_N DOMAIN-CONTAINING PROTEIN-RELATED"/>
    <property type="match status" value="1"/>
</dbReference>
<dbReference type="PANTHER" id="PTHR37003:SF2">
    <property type="entry name" value="PESTICIDAL CRYSTAL PROTEIN N-TERMINAL DOMAIN-CONTAINING PROTEIN"/>
    <property type="match status" value="1"/>
</dbReference>
<dbReference type="Pfam" id="PF17997">
    <property type="entry name" value="Cry1Ac_D5"/>
    <property type="match status" value="1"/>
</dbReference>
<dbReference type="Pfam" id="PF21463">
    <property type="entry name" value="Cry1Ac_dom-VII"/>
    <property type="match status" value="1"/>
</dbReference>
<dbReference type="Pfam" id="PF03944">
    <property type="entry name" value="Endotoxin_C"/>
    <property type="match status" value="1"/>
</dbReference>
<dbReference type="Pfam" id="PF18449">
    <property type="entry name" value="Endotoxin_C2"/>
    <property type="match status" value="1"/>
</dbReference>
<dbReference type="Pfam" id="PF00555">
    <property type="entry name" value="Endotoxin_M"/>
    <property type="match status" value="1"/>
</dbReference>
<dbReference type="Pfam" id="PF03945">
    <property type="entry name" value="Endotoxin_N"/>
    <property type="match status" value="1"/>
</dbReference>
<dbReference type="SUPFAM" id="SSF51096">
    <property type="entry name" value="delta-Endotoxin (insectocide), middle domain"/>
    <property type="match status" value="1"/>
</dbReference>
<dbReference type="SUPFAM" id="SSF56849">
    <property type="entry name" value="delta-Endotoxin (insectocide), N-terminal domain"/>
    <property type="match status" value="1"/>
</dbReference>
<dbReference type="SUPFAM" id="SSF49785">
    <property type="entry name" value="Galactose-binding domain-like"/>
    <property type="match status" value="1"/>
</dbReference>
<accession>Q45715</accession>
<proteinExistence type="evidence at transcript level"/>
<protein>
    <recommendedName>
        <fullName>Pesticidal crystal protein Cry1Ka</fullName>
    </recommendedName>
    <alternativeName>
        <fullName>137 kDa crystal protein</fullName>
    </alternativeName>
    <alternativeName>
        <fullName>Crystaline entomocidal protoxin</fullName>
    </alternativeName>
    <alternativeName>
        <fullName>Insecticidal delta-endotoxin CryIK(a)</fullName>
    </alternativeName>
</protein>
<comment type="function">
    <text>Promotes colloidosmotic lysis by binding to the midgut epithelial cells of insects. Selectively toxic to Artogeia rapae but not active on Plutella xylostella.</text>
</comment>
<comment type="developmental stage">
    <text>The crystal protein is produced during sporulation and is accumulated both as an inclusion and as part of the spore coat.</text>
</comment>
<comment type="miscellaneous">
    <text>Toxic segment of the protein is located in the N-terminus.</text>
</comment>
<comment type="similarity">
    <text evidence="1">Belongs to the delta endotoxin family.</text>
</comment>
<gene>
    <name type="primary">cry1Ka</name>
    <name type="synonym">cry1K</name>
    <name type="synonym">cryIK(a)</name>
</gene>
<reference key="1">
    <citation type="journal article" date="1995" name="FEMS Microbiol. Lett.">
        <title>Cloning of a novel crystal protein gene cry1K from Bacillus thuringiensis subsp. morrisoni.</title>
        <authorList>
            <person name="Koo B.T."/>
            <person name="Park S.-H."/>
            <person name="Choi S.-K."/>
            <person name="Shin B.S."/>
            <person name="Kim J.I."/>
            <person name="Yu J.H."/>
        </authorList>
    </citation>
    <scope>NUCLEOTIDE SEQUENCE [GENOMIC DNA]</scope>
    <source>
        <strain>F190</strain>
    </source>
</reference>
<keyword id="KW-0749">Sporulation</keyword>
<keyword id="KW-0800">Toxin</keyword>
<keyword id="KW-0843">Virulence</keyword>
<feature type="chain" id="PRO_0000174054" description="Pesticidal crystal protein Cry1Ka">
    <location>
        <begin position="1"/>
        <end position="1215"/>
    </location>
</feature>
<sequence length="1215" mass="137379">MNSNRKNENEIINALSIPAVSNHSAQMDLSPDARIEDSLCVAEGNNIDPFVSASTVQTGISIAGRILGVLGVPFAGQLASFYSFLVGELWPSGRDPWEIFMEHVEQIVRQQQITDSVRDTAIARLEGLGRGYRSYQQALETWLDNRNDARSRSIIRERYIALELDITTAIPLFSIRNEEVPLLMVYAQAANLHLLLLRDASLFGSEWGMSSADVNQYYQEQIRYTEEYSNHCVQWYNTGLNRLRGTTAETWVRYNQFRRDLTLGVLDLVALFPSYDTRTYPIPTTAQLTREVYTDPNGVVAGPNNSWFRNGASFSAIENAIIRQPHLYDFLTNLTIYTRRSQVGTTIMNLWAGHRITFNRIQGGSTSEMVYGAITNPVSVSDIPFVNRDVYRTVSLAGGLGSLSGIRYGLTRVDFDMIFRNHPDIVTGLFYHPGHAGIATQVKDSDTELPPETTEQPNYRAFSHLLSHISMGPTTQDVPPVYSWTHQSADRTNTINSDRITQIPLVKAHTLQSGTTVVKGPGFTGGDILRRTSGGPFAFSNVNLDFNLSQRYRARIRYASTTNLRIYVTVAGERIFAGQFDKTMDAGAPLTFQSFSYATINTAFTFPERSSSLTIGADTFSSGNEVYVDRFELIQVTATFEAESDLERARKAVNALFTSTNPRGLKTDVTDYHIDQVSNLVECLSDEFCLDKKRELLEEVKYAKRLSDERNLLQDPTFTSISGQTDRGWIGSTGISIQGGDDIFKENYVRLPGTVDECYPTYLYQKIDESQLKSYTRYQLRGYIEDSQDLEIYLIRYNAKHETLSVPGTESPWPSSGVYPSGRCGEPNRCAPRIEWNPDLDCSCRYGEKCVHHSHHFSLDIDVGCTDLNEDLGVWVIFKIKTQDGHAKLGNLEFIEEKPLLGKALSRVKRAEKKWRDKYEKLQLETKRVYTEAKESVDALFVDSQYDKLQANTNIGIIHGADKQVHRIREPYLSELPVIPSINAAIFEELEGHIFKAYSLYDARNVIKNGDFNNGLSCWNVKGHVDVQQNHHRSVLVLSEWEAEVSQKVRVCPDRGYILRVTAYKEGYGEGCVTIHEFEDNTDVLKFRNFVEEEVYPNNTVTCNDYTTNQSAEGSTDACNSYNRGYEDGYENRYEPNPSAPVNYTPTYEEGMYTDTQGYNHCVSDRGYRNHTPLPAGYVTLELEYFPETEQVWIEIGETEGTFIVGSVELLLMEE</sequence>
<name>CR1KA_BACTM</name>
<evidence type="ECO:0000305" key="1"/>